<organism>
    <name type="scientific">Pseudomonas aeruginosa (strain LESB58)</name>
    <dbReference type="NCBI Taxonomy" id="557722"/>
    <lineage>
        <taxon>Bacteria</taxon>
        <taxon>Pseudomonadati</taxon>
        <taxon>Pseudomonadota</taxon>
        <taxon>Gammaproteobacteria</taxon>
        <taxon>Pseudomonadales</taxon>
        <taxon>Pseudomonadaceae</taxon>
        <taxon>Pseudomonas</taxon>
    </lineage>
</organism>
<feature type="chain" id="PRO_1000197498" description="UPF0060 membrane protein PLES_17921">
    <location>
        <begin position="1"/>
        <end position="109"/>
    </location>
</feature>
<feature type="transmembrane region" description="Helical" evidence="1">
    <location>
        <begin position="5"/>
        <end position="25"/>
    </location>
</feature>
<feature type="transmembrane region" description="Helical" evidence="1">
    <location>
        <begin position="27"/>
        <end position="47"/>
    </location>
</feature>
<feature type="transmembrane region" description="Helical" evidence="1">
    <location>
        <begin position="59"/>
        <end position="79"/>
    </location>
</feature>
<feature type="transmembrane region" description="Helical" evidence="1">
    <location>
        <begin position="84"/>
        <end position="104"/>
    </location>
</feature>
<reference key="1">
    <citation type="journal article" date="2009" name="Genome Res.">
        <title>Newly introduced genomic prophage islands are critical determinants of in vivo competitiveness in the Liverpool epidemic strain of Pseudomonas aeruginosa.</title>
        <authorList>
            <person name="Winstanley C."/>
            <person name="Langille M.G.I."/>
            <person name="Fothergill J.L."/>
            <person name="Kukavica-Ibrulj I."/>
            <person name="Paradis-Bleau C."/>
            <person name="Sanschagrin F."/>
            <person name="Thomson N.R."/>
            <person name="Winsor G.L."/>
            <person name="Quail M.A."/>
            <person name="Lennard N."/>
            <person name="Bignell A."/>
            <person name="Clarke L."/>
            <person name="Seeger K."/>
            <person name="Saunders D."/>
            <person name="Harris D."/>
            <person name="Parkhill J."/>
            <person name="Hancock R.E.W."/>
            <person name="Brinkman F.S.L."/>
            <person name="Levesque R.C."/>
        </authorList>
    </citation>
    <scope>NUCLEOTIDE SEQUENCE [LARGE SCALE GENOMIC DNA]</scope>
    <source>
        <strain>LESB58</strain>
    </source>
</reference>
<sequence>MINYFWFVLAAFCEIAGCYAFYLWLRLGKSALWVLPGLLSLTLFALLLTRVEASYAGRAYAAYGGIYVAASLFWLAFVERSRPLWSDWLGVALCVVGASVVLFGPRLSQ</sequence>
<evidence type="ECO:0000255" key="1">
    <source>
        <dbReference type="HAMAP-Rule" id="MF_00010"/>
    </source>
</evidence>
<dbReference type="EMBL" id="FM209186">
    <property type="protein sequence ID" value="CAW26520.1"/>
    <property type="molecule type" value="Genomic_DNA"/>
</dbReference>
<dbReference type="RefSeq" id="WP_003111657.1">
    <property type="nucleotide sequence ID" value="NC_011770.1"/>
</dbReference>
<dbReference type="KEGG" id="pag:PLES_17921"/>
<dbReference type="HOGENOM" id="CLU_117653_1_0_6"/>
<dbReference type="GO" id="GO:0005886">
    <property type="term" value="C:plasma membrane"/>
    <property type="evidence" value="ECO:0007669"/>
    <property type="project" value="UniProtKB-SubCell"/>
</dbReference>
<dbReference type="HAMAP" id="MF_00010">
    <property type="entry name" value="UPF0060"/>
    <property type="match status" value="1"/>
</dbReference>
<dbReference type="InterPro" id="IPR003844">
    <property type="entry name" value="UPF0060"/>
</dbReference>
<dbReference type="NCBIfam" id="NF002586">
    <property type="entry name" value="PRK02237.1"/>
    <property type="match status" value="1"/>
</dbReference>
<dbReference type="PANTHER" id="PTHR36116">
    <property type="entry name" value="UPF0060 MEMBRANE PROTEIN YNFA"/>
    <property type="match status" value="1"/>
</dbReference>
<dbReference type="PANTHER" id="PTHR36116:SF1">
    <property type="entry name" value="UPF0060 MEMBRANE PROTEIN YNFA"/>
    <property type="match status" value="1"/>
</dbReference>
<dbReference type="Pfam" id="PF02694">
    <property type="entry name" value="UPF0060"/>
    <property type="match status" value="1"/>
</dbReference>
<dbReference type="SUPFAM" id="SSF103481">
    <property type="entry name" value="Multidrug resistance efflux transporter EmrE"/>
    <property type="match status" value="1"/>
</dbReference>
<name>Y1792_PSEA8</name>
<accession>B7V7I2</accession>
<keyword id="KW-0997">Cell inner membrane</keyword>
<keyword id="KW-1003">Cell membrane</keyword>
<keyword id="KW-0472">Membrane</keyword>
<keyword id="KW-0812">Transmembrane</keyword>
<keyword id="KW-1133">Transmembrane helix</keyword>
<protein>
    <recommendedName>
        <fullName evidence="1">UPF0060 membrane protein PLES_17921</fullName>
    </recommendedName>
</protein>
<gene>
    <name type="ordered locus">PLES_17921</name>
</gene>
<comment type="subcellular location">
    <subcellularLocation>
        <location evidence="1">Cell inner membrane</location>
        <topology evidence="1">Multi-pass membrane protein</topology>
    </subcellularLocation>
</comment>
<comment type="similarity">
    <text evidence="1">Belongs to the UPF0060 family.</text>
</comment>
<proteinExistence type="inferred from homology"/>